<sequence length="476" mass="52276">MRVLHVCSELFPLLKTGGLADVIGALPAAQLAEGADVRIILPAFPDLRRGIPETVLVREIDTFAGRVALRYGHYRGIGIYLIDAPALYDRAGSPYHDASLYAYSDNYLRFALLGWMACELACGLDGYWRPEVVHAHDWHAGLTCAYLAARGRPARSVFTVHNLAYQGLFSADHLSELHLPAEFFQIYGLEFYGQISYLKAGLFFADHVTTVSPTYAKEITQPAFGYGMEGLLQALARQGRLTGILNGVDSDIWDPQSDTLLPTRYDAENLQAKAINKTHLQTAMGLQLAENKPIFAVVSRLTVQKGLDLVLEALPELLALGGQLVVLGSGDATLQEAFLAAAAEHSGQVGVQIGYHEAFSHRIIAGSDVILVPSRFEPCGLTQLYGLKYGTLPLVRHTGGLADTVVDCALENLADGSASGFVFNECEAQALVKAIRRAFVLWSRPKHWRHVQRHAMRLDFGWQLAAVDYLSLYRRL</sequence>
<accession>Q8ZA78</accession>
<accession>Q0WA78</accession>
<reference key="1">
    <citation type="journal article" date="2001" name="Nature">
        <title>Genome sequence of Yersinia pestis, the causative agent of plague.</title>
        <authorList>
            <person name="Parkhill J."/>
            <person name="Wren B.W."/>
            <person name="Thomson N.R."/>
            <person name="Titball R.W."/>
            <person name="Holden M.T.G."/>
            <person name="Prentice M.B."/>
            <person name="Sebaihia M."/>
            <person name="James K.D."/>
            <person name="Churcher C.M."/>
            <person name="Mungall K.L."/>
            <person name="Baker S."/>
            <person name="Basham D."/>
            <person name="Bentley S.D."/>
            <person name="Brooks K."/>
            <person name="Cerdeno-Tarraga A.-M."/>
            <person name="Chillingworth T."/>
            <person name="Cronin A."/>
            <person name="Davies R.M."/>
            <person name="Davis P."/>
            <person name="Dougan G."/>
            <person name="Feltwell T."/>
            <person name="Hamlin N."/>
            <person name="Holroyd S."/>
            <person name="Jagels K."/>
            <person name="Karlyshev A.V."/>
            <person name="Leather S."/>
            <person name="Moule S."/>
            <person name="Oyston P.C.F."/>
            <person name="Quail M.A."/>
            <person name="Rutherford K.M."/>
            <person name="Simmonds M."/>
            <person name="Skelton J."/>
            <person name="Stevens K."/>
            <person name="Whitehead S."/>
            <person name="Barrell B.G."/>
        </authorList>
    </citation>
    <scope>NUCLEOTIDE SEQUENCE [LARGE SCALE GENOMIC DNA]</scope>
    <source>
        <strain>CO-92 / Biovar Orientalis</strain>
    </source>
</reference>
<reference key="2">
    <citation type="journal article" date="2002" name="J. Bacteriol.">
        <title>Genome sequence of Yersinia pestis KIM.</title>
        <authorList>
            <person name="Deng W."/>
            <person name="Burland V."/>
            <person name="Plunkett G. III"/>
            <person name="Boutin A."/>
            <person name="Mayhew G.F."/>
            <person name="Liss P."/>
            <person name="Perna N.T."/>
            <person name="Rose D.J."/>
            <person name="Mau B."/>
            <person name="Zhou S."/>
            <person name="Schwartz D.C."/>
            <person name="Fetherston J.D."/>
            <person name="Lindler L.E."/>
            <person name="Brubaker R.R."/>
            <person name="Plano G.V."/>
            <person name="Straley S.C."/>
            <person name="McDonough K.A."/>
            <person name="Nilles M.L."/>
            <person name="Matson J.S."/>
            <person name="Blattner F.R."/>
            <person name="Perry R.D."/>
        </authorList>
    </citation>
    <scope>NUCLEOTIDE SEQUENCE [LARGE SCALE GENOMIC DNA]</scope>
    <source>
        <strain>KIM10+ / Biovar Mediaevalis</strain>
    </source>
</reference>
<reference key="3">
    <citation type="journal article" date="2004" name="DNA Res.">
        <title>Complete genome sequence of Yersinia pestis strain 91001, an isolate avirulent to humans.</title>
        <authorList>
            <person name="Song Y."/>
            <person name="Tong Z."/>
            <person name="Wang J."/>
            <person name="Wang L."/>
            <person name="Guo Z."/>
            <person name="Han Y."/>
            <person name="Zhang J."/>
            <person name="Pei D."/>
            <person name="Zhou D."/>
            <person name="Qin H."/>
            <person name="Pang X."/>
            <person name="Han Y."/>
            <person name="Zhai J."/>
            <person name="Li M."/>
            <person name="Cui B."/>
            <person name="Qi Z."/>
            <person name="Jin L."/>
            <person name="Dai R."/>
            <person name="Chen F."/>
            <person name="Li S."/>
            <person name="Ye C."/>
            <person name="Du Z."/>
            <person name="Lin W."/>
            <person name="Wang J."/>
            <person name="Yu J."/>
            <person name="Yang H."/>
            <person name="Wang J."/>
            <person name="Huang P."/>
            <person name="Yang R."/>
        </authorList>
    </citation>
    <scope>NUCLEOTIDE SEQUENCE [LARGE SCALE GENOMIC DNA]</scope>
    <source>
        <strain>91001 / Biovar Mediaevalis</strain>
    </source>
</reference>
<proteinExistence type="inferred from homology"/>
<gene>
    <name evidence="1" type="primary">glgA</name>
    <name type="ordered locus">YPO3939</name>
    <name type="ordered locus">y3889</name>
    <name type="ordered locus">YP_3301</name>
</gene>
<name>GLGA_YERPE</name>
<protein>
    <recommendedName>
        <fullName evidence="1">Glycogen synthase</fullName>
        <ecNumber evidence="1">2.4.1.21</ecNumber>
    </recommendedName>
    <alternativeName>
        <fullName evidence="1">Starch [bacterial glycogen] synthase</fullName>
    </alternativeName>
</protein>
<feature type="chain" id="PRO_0000188666" description="Glycogen synthase">
    <location>
        <begin position="1"/>
        <end position="476"/>
    </location>
</feature>
<feature type="binding site" evidence="1">
    <location>
        <position position="15"/>
    </location>
    <ligand>
        <name>ADP-alpha-D-glucose</name>
        <dbReference type="ChEBI" id="CHEBI:57498"/>
    </ligand>
</feature>
<organism>
    <name type="scientific">Yersinia pestis</name>
    <dbReference type="NCBI Taxonomy" id="632"/>
    <lineage>
        <taxon>Bacteria</taxon>
        <taxon>Pseudomonadati</taxon>
        <taxon>Pseudomonadota</taxon>
        <taxon>Gammaproteobacteria</taxon>
        <taxon>Enterobacterales</taxon>
        <taxon>Yersiniaceae</taxon>
        <taxon>Yersinia</taxon>
    </lineage>
</organism>
<dbReference type="EC" id="2.4.1.21" evidence="1"/>
<dbReference type="EMBL" id="AL590842">
    <property type="protein sequence ID" value="CAL22520.1"/>
    <property type="molecule type" value="Genomic_DNA"/>
</dbReference>
<dbReference type="EMBL" id="AE009952">
    <property type="protein sequence ID" value="AAM87434.1"/>
    <property type="status" value="ALT_INIT"/>
    <property type="molecule type" value="Genomic_DNA"/>
</dbReference>
<dbReference type="EMBL" id="AE017042">
    <property type="protein sequence ID" value="AAS63466.1"/>
    <property type="status" value="ALT_INIT"/>
    <property type="molecule type" value="Genomic_DNA"/>
</dbReference>
<dbReference type="PIR" id="AE0479">
    <property type="entry name" value="AE0479"/>
</dbReference>
<dbReference type="RefSeq" id="WP_002209498.1">
    <property type="nucleotide sequence ID" value="NZ_WUCM01000085.1"/>
</dbReference>
<dbReference type="RefSeq" id="YP_002348810.1">
    <property type="nucleotide sequence ID" value="NC_003143.1"/>
</dbReference>
<dbReference type="SMR" id="Q8ZA78"/>
<dbReference type="STRING" id="214092.YPO3939"/>
<dbReference type="CAZy" id="GT5">
    <property type="family name" value="Glycosyltransferase Family 5"/>
</dbReference>
<dbReference type="PaxDb" id="214092-YPO3939"/>
<dbReference type="DNASU" id="1148836"/>
<dbReference type="EnsemblBacteria" id="AAS63466">
    <property type="protein sequence ID" value="AAS63466"/>
    <property type="gene ID" value="YP_3301"/>
</dbReference>
<dbReference type="GeneID" id="57974765"/>
<dbReference type="KEGG" id="ype:YPO3939"/>
<dbReference type="KEGG" id="ypk:y3889"/>
<dbReference type="KEGG" id="ypm:YP_3301"/>
<dbReference type="PATRIC" id="fig|214092.21.peg.4465"/>
<dbReference type="eggNOG" id="COG0297">
    <property type="taxonomic scope" value="Bacteria"/>
</dbReference>
<dbReference type="HOGENOM" id="CLU_009583_18_4_6"/>
<dbReference type="OMA" id="TWCPWYM"/>
<dbReference type="OrthoDB" id="9808590at2"/>
<dbReference type="UniPathway" id="UPA00164"/>
<dbReference type="Proteomes" id="UP000000815">
    <property type="component" value="Chromosome"/>
</dbReference>
<dbReference type="Proteomes" id="UP000001019">
    <property type="component" value="Chromosome"/>
</dbReference>
<dbReference type="Proteomes" id="UP000002490">
    <property type="component" value="Chromosome"/>
</dbReference>
<dbReference type="GO" id="GO:0005829">
    <property type="term" value="C:cytosol"/>
    <property type="evidence" value="ECO:0000318"/>
    <property type="project" value="GO_Central"/>
</dbReference>
<dbReference type="GO" id="GO:0009011">
    <property type="term" value="F:alpha-1,4-glucan glucosyltransferase (ADP-glucose donor) activity"/>
    <property type="evidence" value="ECO:0007669"/>
    <property type="project" value="UniProtKB-UniRule"/>
</dbReference>
<dbReference type="GO" id="GO:0004373">
    <property type="term" value="F:alpha-1,4-glucan glucosyltransferase (UDP-glucose donor) activity"/>
    <property type="evidence" value="ECO:0007669"/>
    <property type="project" value="InterPro"/>
</dbReference>
<dbReference type="GO" id="GO:0005978">
    <property type="term" value="P:glycogen biosynthetic process"/>
    <property type="evidence" value="ECO:0000318"/>
    <property type="project" value="GO_Central"/>
</dbReference>
<dbReference type="CDD" id="cd03791">
    <property type="entry name" value="GT5_Glycogen_synthase_DULL1-like"/>
    <property type="match status" value="1"/>
</dbReference>
<dbReference type="FunFam" id="3.40.50.2000:FF:000011">
    <property type="entry name" value="Glycogen synthase"/>
    <property type="match status" value="1"/>
</dbReference>
<dbReference type="Gene3D" id="3.40.50.2000">
    <property type="entry name" value="Glycogen Phosphorylase B"/>
    <property type="match status" value="2"/>
</dbReference>
<dbReference type="HAMAP" id="MF_00484">
    <property type="entry name" value="Glycogen_synth"/>
    <property type="match status" value="1"/>
</dbReference>
<dbReference type="InterPro" id="IPR001296">
    <property type="entry name" value="Glyco_trans_1"/>
</dbReference>
<dbReference type="InterPro" id="IPR011835">
    <property type="entry name" value="GS/SS"/>
</dbReference>
<dbReference type="InterPro" id="IPR013534">
    <property type="entry name" value="Starch_synth_cat_dom"/>
</dbReference>
<dbReference type="NCBIfam" id="TIGR02095">
    <property type="entry name" value="glgA"/>
    <property type="match status" value="1"/>
</dbReference>
<dbReference type="NCBIfam" id="NF001899">
    <property type="entry name" value="PRK00654.1-2"/>
    <property type="match status" value="1"/>
</dbReference>
<dbReference type="PANTHER" id="PTHR45825:SF11">
    <property type="entry name" value="ALPHA AMYLASE DOMAIN-CONTAINING PROTEIN"/>
    <property type="match status" value="1"/>
</dbReference>
<dbReference type="PANTHER" id="PTHR45825">
    <property type="entry name" value="GRANULE-BOUND STARCH SYNTHASE 1, CHLOROPLASTIC/AMYLOPLASTIC"/>
    <property type="match status" value="1"/>
</dbReference>
<dbReference type="Pfam" id="PF08323">
    <property type="entry name" value="Glyco_transf_5"/>
    <property type="match status" value="1"/>
</dbReference>
<dbReference type="Pfam" id="PF00534">
    <property type="entry name" value="Glycos_transf_1"/>
    <property type="match status" value="1"/>
</dbReference>
<dbReference type="SUPFAM" id="SSF53756">
    <property type="entry name" value="UDP-Glycosyltransferase/glycogen phosphorylase"/>
    <property type="match status" value="1"/>
</dbReference>
<evidence type="ECO:0000255" key="1">
    <source>
        <dbReference type="HAMAP-Rule" id="MF_00484"/>
    </source>
</evidence>
<evidence type="ECO:0000305" key="2"/>
<keyword id="KW-0320">Glycogen biosynthesis</keyword>
<keyword id="KW-0328">Glycosyltransferase</keyword>
<keyword id="KW-1185">Reference proteome</keyword>
<keyword id="KW-0808">Transferase</keyword>
<comment type="function">
    <text evidence="1">Synthesizes alpha-1,4-glucan chains using ADP-glucose.</text>
</comment>
<comment type="catalytic activity">
    <reaction evidence="1">
        <text>[(1-&gt;4)-alpha-D-glucosyl](n) + ADP-alpha-D-glucose = [(1-&gt;4)-alpha-D-glucosyl](n+1) + ADP + H(+)</text>
        <dbReference type="Rhea" id="RHEA:18189"/>
        <dbReference type="Rhea" id="RHEA-COMP:9584"/>
        <dbReference type="Rhea" id="RHEA-COMP:9587"/>
        <dbReference type="ChEBI" id="CHEBI:15378"/>
        <dbReference type="ChEBI" id="CHEBI:15444"/>
        <dbReference type="ChEBI" id="CHEBI:57498"/>
        <dbReference type="ChEBI" id="CHEBI:456216"/>
        <dbReference type="EC" id="2.4.1.21"/>
    </reaction>
</comment>
<comment type="pathway">
    <text evidence="1">Glycan biosynthesis; glycogen biosynthesis.</text>
</comment>
<comment type="similarity">
    <text evidence="1">Belongs to the glycosyltransferase 1 family. Bacterial/plant glycogen synthase subfamily.</text>
</comment>
<comment type="sequence caution" evidence="2">
    <conflict type="erroneous initiation">
        <sequence resource="EMBL-CDS" id="AAM87434"/>
    </conflict>
</comment>
<comment type="sequence caution" evidence="2">
    <conflict type="erroneous initiation">
        <sequence resource="EMBL-CDS" id="AAS63466"/>
    </conflict>
</comment>